<dbReference type="EMBL" id="CP000915">
    <property type="protein sequence ID" value="ACD30683.1"/>
    <property type="molecule type" value="Genomic_DNA"/>
</dbReference>
<dbReference type="SMR" id="B2SG24"/>
<dbReference type="KEGG" id="ftm:FTM_0705"/>
<dbReference type="HOGENOM" id="CLU_113688_2_2_6"/>
<dbReference type="GO" id="GO:0005829">
    <property type="term" value="C:cytosol"/>
    <property type="evidence" value="ECO:0007669"/>
    <property type="project" value="TreeGrafter"/>
</dbReference>
<dbReference type="GO" id="GO:0003723">
    <property type="term" value="F:RNA binding"/>
    <property type="evidence" value="ECO:0007669"/>
    <property type="project" value="UniProtKB-UniRule"/>
</dbReference>
<dbReference type="GO" id="GO:0006355">
    <property type="term" value="P:regulation of DNA-templated transcription"/>
    <property type="evidence" value="ECO:0007669"/>
    <property type="project" value="InterPro"/>
</dbReference>
<dbReference type="GO" id="GO:0043487">
    <property type="term" value="P:regulation of RNA stability"/>
    <property type="evidence" value="ECO:0007669"/>
    <property type="project" value="TreeGrafter"/>
</dbReference>
<dbReference type="GO" id="GO:0045974">
    <property type="term" value="P:regulation of translation, ncRNA-mediated"/>
    <property type="evidence" value="ECO:0007669"/>
    <property type="project" value="TreeGrafter"/>
</dbReference>
<dbReference type="CDD" id="cd01716">
    <property type="entry name" value="Hfq"/>
    <property type="match status" value="1"/>
</dbReference>
<dbReference type="FunFam" id="2.30.30.100:FF:000001">
    <property type="entry name" value="RNA-binding protein Hfq"/>
    <property type="match status" value="1"/>
</dbReference>
<dbReference type="Gene3D" id="2.30.30.100">
    <property type="match status" value="1"/>
</dbReference>
<dbReference type="HAMAP" id="MF_00436">
    <property type="entry name" value="Hfq"/>
    <property type="match status" value="1"/>
</dbReference>
<dbReference type="InterPro" id="IPR005001">
    <property type="entry name" value="Hfq"/>
</dbReference>
<dbReference type="InterPro" id="IPR010920">
    <property type="entry name" value="LSM_dom_sf"/>
</dbReference>
<dbReference type="InterPro" id="IPR047575">
    <property type="entry name" value="Sm"/>
</dbReference>
<dbReference type="NCBIfam" id="TIGR02383">
    <property type="entry name" value="Hfq"/>
    <property type="match status" value="1"/>
</dbReference>
<dbReference type="NCBIfam" id="NF001602">
    <property type="entry name" value="PRK00395.1"/>
    <property type="match status" value="1"/>
</dbReference>
<dbReference type="PANTHER" id="PTHR34772">
    <property type="entry name" value="RNA-BINDING PROTEIN HFQ"/>
    <property type="match status" value="1"/>
</dbReference>
<dbReference type="PANTHER" id="PTHR34772:SF1">
    <property type="entry name" value="RNA-BINDING PROTEIN HFQ"/>
    <property type="match status" value="1"/>
</dbReference>
<dbReference type="Pfam" id="PF17209">
    <property type="entry name" value="Hfq"/>
    <property type="match status" value="1"/>
</dbReference>
<dbReference type="SUPFAM" id="SSF50182">
    <property type="entry name" value="Sm-like ribonucleoproteins"/>
    <property type="match status" value="1"/>
</dbReference>
<dbReference type="PROSITE" id="PS52002">
    <property type="entry name" value="SM"/>
    <property type="match status" value="1"/>
</dbReference>
<evidence type="ECO:0000255" key="1">
    <source>
        <dbReference type="HAMAP-Rule" id="MF_00436"/>
    </source>
</evidence>
<evidence type="ECO:0000255" key="2">
    <source>
        <dbReference type="PROSITE-ProRule" id="PRU01346"/>
    </source>
</evidence>
<evidence type="ECO:0000256" key="3">
    <source>
        <dbReference type="SAM" id="MobiDB-lite"/>
    </source>
</evidence>
<protein>
    <recommendedName>
        <fullName evidence="1">RNA-binding protein Hfq</fullName>
    </recommendedName>
</protein>
<gene>
    <name evidence="1" type="primary">hfq</name>
    <name type="ordered locus">FTM_0705</name>
</gene>
<proteinExistence type="inferred from homology"/>
<organism>
    <name type="scientific">Francisella tularensis subsp. mediasiatica (strain FSC147)</name>
    <dbReference type="NCBI Taxonomy" id="441952"/>
    <lineage>
        <taxon>Bacteria</taxon>
        <taxon>Pseudomonadati</taxon>
        <taxon>Pseudomonadota</taxon>
        <taxon>Gammaproteobacteria</taxon>
        <taxon>Thiotrichales</taxon>
        <taxon>Francisellaceae</taxon>
        <taxon>Francisella</taxon>
    </lineage>
</organism>
<keyword id="KW-0694">RNA-binding</keyword>
<keyword id="KW-0346">Stress response</keyword>
<accession>B2SG24</accession>
<sequence>MSRISSLQDPFLNALRKEKVNVSVYLVNGIKLQGQVEAFDQFCIVLRNTVNQMVYKHAISTIVPAKSVRMVYSSFNPYHQNSNDEQDENVDDIHSDDLEIQENEGNIHE</sequence>
<name>HFQ_FRATM</name>
<feature type="chain" id="PRO_1000190333" description="RNA-binding protein Hfq">
    <location>
        <begin position="1"/>
        <end position="109"/>
    </location>
</feature>
<feature type="domain" description="Sm" evidence="2">
    <location>
        <begin position="9"/>
        <end position="68"/>
    </location>
</feature>
<feature type="region of interest" description="Disordered" evidence="3">
    <location>
        <begin position="77"/>
        <end position="109"/>
    </location>
</feature>
<reference key="1">
    <citation type="journal article" date="2009" name="PLoS Pathog.">
        <title>Molecular evolutionary consequences of niche restriction in Francisella tularensis, a facultative intracellular pathogen.</title>
        <authorList>
            <person name="Larsson P."/>
            <person name="Elfsmark D."/>
            <person name="Svensson K."/>
            <person name="Wikstroem P."/>
            <person name="Forsman M."/>
            <person name="Brettin T."/>
            <person name="Keim P."/>
            <person name="Johansson A."/>
        </authorList>
    </citation>
    <scope>NUCLEOTIDE SEQUENCE [LARGE SCALE GENOMIC DNA]</scope>
    <source>
        <strain>FSC147</strain>
    </source>
</reference>
<comment type="function">
    <text evidence="1">RNA chaperone that binds small regulatory RNA (sRNAs) and mRNAs to facilitate mRNA translational regulation in response to envelope stress, environmental stress and changes in metabolite concentrations. Also binds with high specificity to tRNAs.</text>
</comment>
<comment type="subunit">
    <text evidence="1">Homohexamer.</text>
</comment>
<comment type="similarity">
    <text evidence="1">Belongs to the Hfq family.</text>
</comment>